<comment type="catalytic activity">
    <reaction evidence="3">
        <text>O-phospho-L-tyrosyl-[protein] + H2O = L-tyrosyl-[protein] + phosphate</text>
        <dbReference type="Rhea" id="RHEA:10684"/>
        <dbReference type="Rhea" id="RHEA-COMP:10136"/>
        <dbReference type="Rhea" id="RHEA-COMP:20101"/>
        <dbReference type="ChEBI" id="CHEBI:15377"/>
        <dbReference type="ChEBI" id="CHEBI:43474"/>
        <dbReference type="ChEBI" id="CHEBI:46858"/>
        <dbReference type="ChEBI" id="CHEBI:61978"/>
        <dbReference type="EC" id="3.1.3.48"/>
    </reaction>
</comment>
<comment type="similarity">
    <text evidence="4">Belongs to the protein-tyrosine phosphatase family.</text>
</comment>
<proteinExistence type="evidence at transcript level"/>
<name>PTP13_STYPL</name>
<accession>P28205</accession>
<organism>
    <name type="scientific">Styela plicata</name>
    <name type="common">Wrinkled sea squirt</name>
    <name type="synonym">Ascidia plicata</name>
    <dbReference type="NCBI Taxonomy" id="7726"/>
    <lineage>
        <taxon>Eukaryota</taxon>
        <taxon>Metazoa</taxon>
        <taxon>Chordata</taxon>
        <taxon>Tunicata</taxon>
        <taxon>Ascidiacea</taxon>
        <taxon>Stolidobranchia</taxon>
        <taxon>Styelidae</taxon>
        <taxon>Styela</taxon>
    </lineage>
</organism>
<dbReference type="EC" id="3.1.3.48"/>
<dbReference type="EMBL" id="M37998">
    <property type="protein sequence ID" value="AAA29831.1"/>
    <property type="molecule type" value="mRNA"/>
</dbReference>
<dbReference type="SMR" id="P28205"/>
<dbReference type="GO" id="GO:0004725">
    <property type="term" value="F:protein tyrosine phosphatase activity"/>
    <property type="evidence" value="ECO:0007669"/>
    <property type="project" value="UniProtKB-EC"/>
</dbReference>
<dbReference type="Gene3D" id="3.90.190.10">
    <property type="entry name" value="Protein tyrosine phosphatase superfamily"/>
    <property type="match status" value="1"/>
</dbReference>
<dbReference type="InterPro" id="IPR029021">
    <property type="entry name" value="Prot-tyrosine_phosphatase-like"/>
</dbReference>
<dbReference type="InterPro" id="IPR050348">
    <property type="entry name" value="Protein-Tyr_Phosphatase"/>
</dbReference>
<dbReference type="InterPro" id="IPR000242">
    <property type="entry name" value="PTP_cat"/>
</dbReference>
<dbReference type="PANTHER" id="PTHR19134">
    <property type="entry name" value="RECEPTOR-TYPE TYROSINE-PROTEIN PHOSPHATASE"/>
    <property type="match status" value="1"/>
</dbReference>
<dbReference type="PANTHER" id="PTHR19134:SF449">
    <property type="entry name" value="TYROSINE-PROTEIN PHOSPHATASE 1"/>
    <property type="match status" value="1"/>
</dbReference>
<dbReference type="Pfam" id="PF00102">
    <property type="entry name" value="Y_phosphatase"/>
    <property type="match status" value="1"/>
</dbReference>
<dbReference type="SMART" id="SM00194">
    <property type="entry name" value="PTPc"/>
    <property type="match status" value="1"/>
</dbReference>
<dbReference type="SUPFAM" id="SSF52799">
    <property type="entry name" value="(Phosphotyrosine protein) phosphatases II"/>
    <property type="match status" value="1"/>
</dbReference>
<dbReference type="PROSITE" id="PS50055">
    <property type="entry name" value="TYR_PHOSPHATASE_PTP"/>
    <property type="match status" value="1"/>
</dbReference>
<evidence type="ECO:0000250" key="1"/>
<evidence type="ECO:0000255" key="2">
    <source>
        <dbReference type="PROSITE-ProRule" id="PRU00160"/>
    </source>
</evidence>
<evidence type="ECO:0000255" key="3">
    <source>
        <dbReference type="PROSITE-ProRule" id="PRU10044"/>
    </source>
</evidence>
<evidence type="ECO:0000305" key="4"/>
<keyword id="KW-0378">Hydrolase</keyword>
<keyword id="KW-0904">Protein phosphatase</keyword>
<sequence length="114" mass="13649">WRMLWEHNSTIVVMLTKLREMGRDKCHQYWPAERSARYQYFVVDPMSEYSMHQYILREFKVTDARDGQSRTVRQFQFTDWPEQGVPKSGEGFIDFIGQVHKTKEQFGQEGPITI</sequence>
<protein>
    <recommendedName>
        <fullName>Tyrosine-protein phosphatase 13</fullName>
        <ecNumber>3.1.3.48</ecNumber>
    </recommendedName>
</protein>
<feature type="chain" id="PRO_0000094901" description="Tyrosine-protein phosphatase 13">
    <location>
        <begin position="1" status="less than"/>
        <end position="114" status="greater than"/>
    </location>
</feature>
<feature type="domain" description="Tyrosine-protein phosphatase" evidence="2">
    <location>
        <begin position="1" status="less than"/>
        <end position="114" status="greater than"/>
    </location>
</feature>
<feature type="binding site" evidence="1">
    <location>
        <position position="82"/>
    </location>
    <ligand>
        <name>substrate</name>
    </ligand>
</feature>
<feature type="non-terminal residue">
    <location>
        <position position="1"/>
    </location>
</feature>
<feature type="non-terminal residue">
    <location>
        <position position="114"/>
    </location>
</feature>
<reference key="1">
    <citation type="journal article" date="1991" name="Immunogenetics">
        <title>Protein tyrosine phosphatase domains from the protochordate Styela plicata.</title>
        <authorList>
            <person name="Matthews R.J."/>
            <person name="Flores E."/>
            <person name="Thomas M.L."/>
        </authorList>
    </citation>
    <scope>NUCLEOTIDE SEQUENCE [MRNA]</scope>
</reference>
<gene>
    <name type="primary">STY-13</name>
</gene>